<feature type="chain" id="PRO_1000096007" description="Phosphoribosylaminoimidazole-succinocarboxamide synthase">
    <location>
        <begin position="1"/>
        <end position="305"/>
    </location>
</feature>
<sequence length="305" mass="33132">MNTSQPALHTSMLTSLPLLARGKVRDNYAVGIDRILMVASDRLSAFDVIMGEPIPGKGALLTQMALFWFDKLGPKGLNLCPIHLTGDAPESVVTAAEVPQVTGRSMLVKRLKPLPVEAVVRGYLAGSGWKEYQHNGAVCGVKLPAGLQNASKLPEPIYTPAAKAAAGDHDENITFEQTVEMIGLDLATRIRDISIAIYKAASEIARAKGIIIADTKFEFGLDADGTLTLMDEVLTPDSSRFWPAESYQEGINPPSFDKQFVRDWLEQVQVNGKPWNKTPPAPRVPDEVIAKTAAKYQEALTRLIG</sequence>
<evidence type="ECO:0000255" key="1">
    <source>
        <dbReference type="HAMAP-Rule" id="MF_00137"/>
    </source>
</evidence>
<accession>Q222U2</accession>
<organism>
    <name type="scientific">Albidiferax ferrireducens (strain ATCC BAA-621 / DSM 15236 / T118)</name>
    <name type="common">Rhodoferax ferrireducens</name>
    <dbReference type="NCBI Taxonomy" id="338969"/>
    <lineage>
        <taxon>Bacteria</taxon>
        <taxon>Pseudomonadati</taxon>
        <taxon>Pseudomonadota</taxon>
        <taxon>Betaproteobacteria</taxon>
        <taxon>Burkholderiales</taxon>
        <taxon>Comamonadaceae</taxon>
        <taxon>Rhodoferax</taxon>
    </lineage>
</organism>
<gene>
    <name evidence="1" type="primary">purC</name>
    <name type="ordered locus">Rfer_0203</name>
</gene>
<reference key="1">
    <citation type="submission" date="2006-02" db="EMBL/GenBank/DDBJ databases">
        <title>Complete sequence of chromosome of Rhodoferax ferrireducens DSM 15236.</title>
        <authorList>
            <person name="Copeland A."/>
            <person name="Lucas S."/>
            <person name="Lapidus A."/>
            <person name="Barry K."/>
            <person name="Detter J.C."/>
            <person name="Glavina del Rio T."/>
            <person name="Hammon N."/>
            <person name="Israni S."/>
            <person name="Pitluck S."/>
            <person name="Brettin T."/>
            <person name="Bruce D."/>
            <person name="Han C."/>
            <person name="Tapia R."/>
            <person name="Gilna P."/>
            <person name="Kiss H."/>
            <person name="Schmutz J."/>
            <person name="Larimer F."/>
            <person name="Land M."/>
            <person name="Kyrpides N."/>
            <person name="Ivanova N."/>
            <person name="Richardson P."/>
        </authorList>
    </citation>
    <scope>NUCLEOTIDE SEQUENCE [LARGE SCALE GENOMIC DNA]</scope>
    <source>
        <strain>ATCC BAA-621 / DSM 15236 / T118</strain>
    </source>
</reference>
<proteinExistence type="inferred from homology"/>
<comment type="catalytic activity">
    <reaction evidence="1">
        <text>5-amino-1-(5-phospho-D-ribosyl)imidazole-4-carboxylate + L-aspartate + ATP = (2S)-2-[5-amino-1-(5-phospho-beta-D-ribosyl)imidazole-4-carboxamido]succinate + ADP + phosphate + 2 H(+)</text>
        <dbReference type="Rhea" id="RHEA:22628"/>
        <dbReference type="ChEBI" id="CHEBI:15378"/>
        <dbReference type="ChEBI" id="CHEBI:29991"/>
        <dbReference type="ChEBI" id="CHEBI:30616"/>
        <dbReference type="ChEBI" id="CHEBI:43474"/>
        <dbReference type="ChEBI" id="CHEBI:58443"/>
        <dbReference type="ChEBI" id="CHEBI:77657"/>
        <dbReference type="ChEBI" id="CHEBI:456216"/>
        <dbReference type="EC" id="6.3.2.6"/>
    </reaction>
</comment>
<comment type="pathway">
    <text evidence="1">Purine metabolism; IMP biosynthesis via de novo pathway; 5-amino-1-(5-phospho-D-ribosyl)imidazole-4-carboxamide from 5-amino-1-(5-phospho-D-ribosyl)imidazole-4-carboxylate: step 1/2.</text>
</comment>
<comment type="similarity">
    <text evidence="1">Belongs to the SAICAR synthetase family.</text>
</comment>
<name>PUR7_ALBFT</name>
<protein>
    <recommendedName>
        <fullName evidence="1">Phosphoribosylaminoimidazole-succinocarboxamide synthase</fullName>
        <ecNumber evidence="1">6.3.2.6</ecNumber>
    </recommendedName>
    <alternativeName>
        <fullName evidence="1">SAICAR synthetase</fullName>
    </alternativeName>
</protein>
<dbReference type="EC" id="6.3.2.6" evidence="1"/>
<dbReference type="EMBL" id="CP000267">
    <property type="protein sequence ID" value="ABD67961.1"/>
    <property type="molecule type" value="Genomic_DNA"/>
</dbReference>
<dbReference type="RefSeq" id="WP_011462534.1">
    <property type="nucleotide sequence ID" value="NC_007908.1"/>
</dbReference>
<dbReference type="SMR" id="Q222U2"/>
<dbReference type="STRING" id="338969.Rfer_0203"/>
<dbReference type="KEGG" id="rfr:Rfer_0203"/>
<dbReference type="eggNOG" id="COG0152">
    <property type="taxonomic scope" value="Bacteria"/>
</dbReference>
<dbReference type="HOGENOM" id="CLU_045637_0_0_4"/>
<dbReference type="OrthoDB" id="9801549at2"/>
<dbReference type="UniPathway" id="UPA00074">
    <property type="reaction ID" value="UER00131"/>
</dbReference>
<dbReference type="Proteomes" id="UP000008332">
    <property type="component" value="Chromosome"/>
</dbReference>
<dbReference type="GO" id="GO:0005737">
    <property type="term" value="C:cytoplasm"/>
    <property type="evidence" value="ECO:0007669"/>
    <property type="project" value="TreeGrafter"/>
</dbReference>
<dbReference type="GO" id="GO:0005524">
    <property type="term" value="F:ATP binding"/>
    <property type="evidence" value="ECO:0007669"/>
    <property type="project" value="UniProtKB-KW"/>
</dbReference>
<dbReference type="GO" id="GO:0004639">
    <property type="term" value="F:phosphoribosylaminoimidazolesuccinocarboxamide synthase activity"/>
    <property type="evidence" value="ECO:0007669"/>
    <property type="project" value="UniProtKB-UniRule"/>
</dbReference>
<dbReference type="GO" id="GO:0006189">
    <property type="term" value="P:'de novo' IMP biosynthetic process"/>
    <property type="evidence" value="ECO:0007669"/>
    <property type="project" value="UniProtKB-UniRule"/>
</dbReference>
<dbReference type="CDD" id="cd01414">
    <property type="entry name" value="SAICAR_synt_Sc"/>
    <property type="match status" value="1"/>
</dbReference>
<dbReference type="FunFam" id="3.30.470.20:FF:000015">
    <property type="entry name" value="Phosphoribosylaminoimidazole-succinocarboxamide synthase"/>
    <property type="match status" value="1"/>
</dbReference>
<dbReference type="Gene3D" id="3.30.470.20">
    <property type="entry name" value="ATP-grasp fold, B domain"/>
    <property type="match status" value="1"/>
</dbReference>
<dbReference type="Gene3D" id="3.30.200.20">
    <property type="entry name" value="Phosphorylase Kinase, domain 1"/>
    <property type="match status" value="1"/>
</dbReference>
<dbReference type="HAMAP" id="MF_00137">
    <property type="entry name" value="SAICAR_synth"/>
    <property type="match status" value="1"/>
</dbReference>
<dbReference type="InterPro" id="IPR028923">
    <property type="entry name" value="SAICAR_synt/ADE2_N"/>
</dbReference>
<dbReference type="InterPro" id="IPR001636">
    <property type="entry name" value="SAICAR_synth"/>
</dbReference>
<dbReference type="InterPro" id="IPR018236">
    <property type="entry name" value="SAICAR_synthetase_CS"/>
</dbReference>
<dbReference type="NCBIfam" id="NF010568">
    <property type="entry name" value="PRK13961.1"/>
    <property type="match status" value="1"/>
</dbReference>
<dbReference type="NCBIfam" id="TIGR00081">
    <property type="entry name" value="purC"/>
    <property type="match status" value="1"/>
</dbReference>
<dbReference type="PANTHER" id="PTHR43700">
    <property type="entry name" value="PHOSPHORIBOSYLAMINOIMIDAZOLE-SUCCINOCARBOXAMIDE SYNTHASE"/>
    <property type="match status" value="1"/>
</dbReference>
<dbReference type="PANTHER" id="PTHR43700:SF1">
    <property type="entry name" value="PHOSPHORIBOSYLAMINOIMIDAZOLE-SUCCINOCARBOXAMIDE SYNTHASE"/>
    <property type="match status" value="1"/>
</dbReference>
<dbReference type="Pfam" id="PF01259">
    <property type="entry name" value="SAICAR_synt"/>
    <property type="match status" value="1"/>
</dbReference>
<dbReference type="SUPFAM" id="SSF56104">
    <property type="entry name" value="SAICAR synthase-like"/>
    <property type="match status" value="1"/>
</dbReference>
<dbReference type="PROSITE" id="PS01057">
    <property type="entry name" value="SAICAR_SYNTHETASE_1"/>
    <property type="match status" value="1"/>
</dbReference>
<dbReference type="PROSITE" id="PS01058">
    <property type="entry name" value="SAICAR_SYNTHETASE_2"/>
    <property type="match status" value="1"/>
</dbReference>
<keyword id="KW-0067">ATP-binding</keyword>
<keyword id="KW-0436">Ligase</keyword>
<keyword id="KW-0547">Nucleotide-binding</keyword>
<keyword id="KW-0658">Purine biosynthesis</keyword>
<keyword id="KW-1185">Reference proteome</keyword>